<name>NHAA_ACISJ</name>
<protein>
    <recommendedName>
        <fullName evidence="1">Na(+)/H(+) antiporter NhaA</fullName>
    </recommendedName>
    <alternativeName>
        <fullName evidence="1">Sodium/proton antiporter NhaA</fullName>
    </alternativeName>
</protein>
<dbReference type="EMBL" id="CP000539">
    <property type="protein sequence ID" value="ABM43963.1"/>
    <property type="molecule type" value="Genomic_DNA"/>
</dbReference>
<dbReference type="SMR" id="A1WCI8"/>
<dbReference type="STRING" id="232721.Ajs_3856"/>
<dbReference type="KEGG" id="ajs:Ajs_3856"/>
<dbReference type="eggNOG" id="COG3004">
    <property type="taxonomic scope" value="Bacteria"/>
</dbReference>
<dbReference type="HOGENOM" id="CLU_015803_1_0_4"/>
<dbReference type="Proteomes" id="UP000000645">
    <property type="component" value="Chromosome"/>
</dbReference>
<dbReference type="GO" id="GO:0005886">
    <property type="term" value="C:plasma membrane"/>
    <property type="evidence" value="ECO:0007669"/>
    <property type="project" value="UniProtKB-SubCell"/>
</dbReference>
<dbReference type="GO" id="GO:0015385">
    <property type="term" value="F:sodium:proton antiporter activity"/>
    <property type="evidence" value="ECO:0007669"/>
    <property type="project" value="TreeGrafter"/>
</dbReference>
<dbReference type="GO" id="GO:0006885">
    <property type="term" value="P:regulation of pH"/>
    <property type="evidence" value="ECO:0007669"/>
    <property type="project" value="InterPro"/>
</dbReference>
<dbReference type="Gene3D" id="1.20.1530.10">
    <property type="entry name" value="Na+/H+ antiporter like domain"/>
    <property type="match status" value="1"/>
</dbReference>
<dbReference type="HAMAP" id="MF_01844">
    <property type="entry name" value="NhaA"/>
    <property type="match status" value="1"/>
</dbReference>
<dbReference type="InterPro" id="IPR023171">
    <property type="entry name" value="Na/H_antiporter_dom_sf"/>
</dbReference>
<dbReference type="InterPro" id="IPR004670">
    <property type="entry name" value="NhaA"/>
</dbReference>
<dbReference type="NCBIfam" id="TIGR00773">
    <property type="entry name" value="NhaA"/>
    <property type="match status" value="1"/>
</dbReference>
<dbReference type="PANTHER" id="PTHR30341:SF0">
    <property type="entry name" value="NA(+)_H(+) ANTIPORTER NHAA"/>
    <property type="match status" value="1"/>
</dbReference>
<dbReference type="PANTHER" id="PTHR30341">
    <property type="entry name" value="SODIUM ION/PROTON ANTIPORTER NHAA-RELATED"/>
    <property type="match status" value="1"/>
</dbReference>
<dbReference type="Pfam" id="PF06965">
    <property type="entry name" value="Na_H_antiport_1"/>
    <property type="match status" value="1"/>
</dbReference>
<accession>A1WCI8</accession>
<sequence length="416" mass="43070">MTDRLTPRRAAPRQPALLPLADRCTALLSRLSHADAAGGIVLLIAAAAALAWANSPWAASYHALWHVPLSVAVGGWQLTQSLHFWVNDALMTVFFLVVGLEIRRELHDGVLAQPRDALLPVLAALGGVAVPALLYLALVPPALRSGWAVPTATDIAFAVGVLALLGRGLPPVLRVFLLTLAIIDDLVAVLIIALFYSGGLQWPMFGIAALGLAGVLLLQQLGVRRAWAYVPAGAVLWWGIWQTGAHPTLAGVVLGLVTPVHALAGREPAPPVQRVQASLHPWVTFGVMPLFALANAGVALGSAGGAQPAAPGTGLLMAAVAVALVAGKPLGVLLACWLAVRLRLCALPAGMGWGGLLLTGLLAGIGFTMAIFIATLAFDSAALLDAAKRGVLLASGLAALLGLAWGWWLQRRATTA</sequence>
<proteinExistence type="inferred from homology"/>
<keyword id="KW-0050">Antiport</keyword>
<keyword id="KW-0997">Cell inner membrane</keyword>
<keyword id="KW-1003">Cell membrane</keyword>
<keyword id="KW-0406">Ion transport</keyword>
<keyword id="KW-0472">Membrane</keyword>
<keyword id="KW-0915">Sodium</keyword>
<keyword id="KW-0739">Sodium transport</keyword>
<keyword id="KW-0812">Transmembrane</keyword>
<keyword id="KW-1133">Transmembrane helix</keyword>
<keyword id="KW-0813">Transport</keyword>
<organism>
    <name type="scientific">Acidovorax sp. (strain JS42)</name>
    <dbReference type="NCBI Taxonomy" id="232721"/>
    <lineage>
        <taxon>Bacteria</taxon>
        <taxon>Pseudomonadati</taxon>
        <taxon>Pseudomonadota</taxon>
        <taxon>Betaproteobacteria</taxon>
        <taxon>Burkholderiales</taxon>
        <taxon>Comamonadaceae</taxon>
        <taxon>Acidovorax</taxon>
    </lineage>
</organism>
<reference key="1">
    <citation type="submission" date="2006-12" db="EMBL/GenBank/DDBJ databases">
        <title>Complete sequence of chromosome 1 of Acidovorax sp. JS42.</title>
        <authorList>
            <person name="Copeland A."/>
            <person name="Lucas S."/>
            <person name="Lapidus A."/>
            <person name="Barry K."/>
            <person name="Detter J.C."/>
            <person name="Glavina del Rio T."/>
            <person name="Dalin E."/>
            <person name="Tice H."/>
            <person name="Pitluck S."/>
            <person name="Chertkov O."/>
            <person name="Brettin T."/>
            <person name="Bruce D."/>
            <person name="Han C."/>
            <person name="Tapia R."/>
            <person name="Gilna P."/>
            <person name="Schmutz J."/>
            <person name="Larimer F."/>
            <person name="Land M."/>
            <person name="Hauser L."/>
            <person name="Kyrpides N."/>
            <person name="Kim E."/>
            <person name="Stahl D."/>
            <person name="Richardson P."/>
        </authorList>
    </citation>
    <scope>NUCLEOTIDE SEQUENCE [LARGE SCALE GENOMIC DNA]</scope>
    <source>
        <strain>JS42</strain>
    </source>
</reference>
<feature type="chain" id="PRO_0000334219" description="Na(+)/H(+) antiporter NhaA">
    <location>
        <begin position="1"/>
        <end position="416"/>
    </location>
</feature>
<feature type="transmembrane region" description="Helical" evidence="1">
    <location>
        <begin position="39"/>
        <end position="59"/>
    </location>
</feature>
<feature type="transmembrane region" description="Helical" evidence="1">
    <location>
        <begin position="82"/>
        <end position="102"/>
    </location>
</feature>
<feature type="transmembrane region" description="Helical" evidence="1">
    <location>
        <begin position="119"/>
        <end position="139"/>
    </location>
</feature>
<feature type="transmembrane region" description="Helical" evidence="1">
    <location>
        <begin position="146"/>
        <end position="166"/>
    </location>
</feature>
<feature type="transmembrane region" description="Helical" evidence="1">
    <location>
        <begin position="175"/>
        <end position="195"/>
    </location>
</feature>
<feature type="transmembrane region" description="Helical" evidence="1">
    <location>
        <begin position="198"/>
        <end position="218"/>
    </location>
</feature>
<feature type="transmembrane region" description="Helical" evidence="1">
    <location>
        <begin position="234"/>
        <end position="254"/>
    </location>
</feature>
<feature type="transmembrane region" description="Helical" evidence="1">
    <location>
        <begin position="281"/>
        <end position="301"/>
    </location>
</feature>
<feature type="transmembrane region" description="Helical" evidence="1">
    <location>
        <begin position="315"/>
        <end position="335"/>
    </location>
</feature>
<feature type="transmembrane region" description="Helical" evidence="1">
    <location>
        <begin position="353"/>
        <end position="373"/>
    </location>
</feature>
<feature type="transmembrane region" description="Helical" evidence="1">
    <location>
        <begin position="390"/>
        <end position="410"/>
    </location>
</feature>
<evidence type="ECO:0000255" key="1">
    <source>
        <dbReference type="HAMAP-Rule" id="MF_01844"/>
    </source>
</evidence>
<gene>
    <name evidence="1" type="primary">nhaA</name>
    <name type="ordered locus">Ajs_3856</name>
</gene>
<comment type="function">
    <text evidence="1">Na(+)/H(+) antiporter that extrudes sodium in exchange for external protons.</text>
</comment>
<comment type="catalytic activity">
    <reaction evidence="1">
        <text>Na(+)(in) + 2 H(+)(out) = Na(+)(out) + 2 H(+)(in)</text>
        <dbReference type="Rhea" id="RHEA:29251"/>
        <dbReference type="ChEBI" id="CHEBI:15378"/>
        <dbReference type="ChEBI" id="CHEBI:29101"/>
    </reaction>
    <physiologicalReaction direction="left-to-right" evidence="1">
        <dbReference type="Rhea" id="RHEA:29252"/>
    </physiologicalReaction>
</comment>
<comment type="subcellular location">
    <subcellularLocation>
        <location evidence="1">Cell inner membrane</location>
        <topology evidence="1">Multi-pass membrane protein</topology>
    </subcellularLocation>
</comment>
<comment type="similarity">
    <text evidence="1">Belongs to the NhaA Na(+)/H(+) (TC 2.A.33) antiporter family.</text>
</comment>